<comment type="subunit">
    <text evidence="1">Part of the 50S ribosomal subunit.</text>
</comment>
<comment type="similarity">
    <text evidence="1">Belongs to the bacterial ribosomal protein bL31 family. Type B subfamily.</text>
</comment>
<keyword id="KW-0687">Ribonucleoprotein</keyword>
<keyword id="KW-0689">Ribosomal protein</keyword>
<accession>Q662D5</accession>
<feature type="chain" id="PRO_0000173209" description="Large ribosomal subunit protein bL31B">
    <location>
        <begin position="1"/>
        <end position="81"/>
    </location>
</feature>
<proteinExistence type="inferred from homology"/>
<dbReference type="EMBL" id="CP000013">
    <property type="protein sequence ID" value="AAU07086.1"/>
    <property type="molecule type" value="Genomic_DNA"/>
</dbReference>
<dbReference type="RefSeq" id="WP_004791864.1">
    <property type="nucleotide sequence ID" value="NZ_CP028872.1"/>
</dbReference>
<dbReference type="SMR" id="Q662D5"/>
<dbReference type="GeneID" id="45161022"/>
<dbReference type="KEGG" id="bga:BG0232"/>
<dbReference type="eggNOG" id="COG0254">
    <property type="taxonomic scope" value="Bacteria"/>
</dbReference>
<dbReference type="HOGENOM" id="CLU_114306_2_2_12"/>
<dbReference type="OrthoDB" id="9803251at2"/>
<dbReference type="Proteomes" id="UP000002276">
    <property type="component" value="Chromosome"/>
</dbReference>
<dbReference type="GO" id="GO:1990904">
    <property type="term" value="C:ribonucleoprotein complex"/>
    <property type="evidence" value="ECO:0007669"/>
    <property type="project" value="UniProtKB-KW"/>
</dbReference>
<dbReference type="GO" id="GO:0005840">
    <property type="term" value="C:ribosome"/>
    <property type="evidence" value="ECO:0007669"/>
    <property type="project" value="UniProtKB-KW"/>
</dbReference>
<dbReference type="GO" id="GO:0003735">
    <property type="term" value="F:structural constituent of ribosome"/>
    <property type="evidence" value="ECO:0007669"/>
    <property type="project" value="InterPro"/>
</dbReference>
<dbReference type="GO" id="GO:0006412">
    <property type="term" value="P:translation"/>
    <property type="evidence" value="ECO:0007669"/>
    <property type="project" value="UniProtKB-UniRule"/>
</dbReference>
<dbReference type="Gene3D" id="4.10.830.30">
    <property type="entry name" value="Ribosomal protein L31"/>
    <property type="match status" value="1"/>
</dbReference>
<dbReference type="HAMAP" id="MF_00502">
    <property type="entry name" value="Ribosomal_bL31_2"/>
    <property type="match status" value="1"/>
</dbReference>
<dbReference type="InterPro" id="IPR034704">
    <property type="entry name" value="Ribosomal_bL28/bL31-like_sf"/>
</dbReference>
<dbReference type="InterPro" id="IPR002150">
    <property type="entry name" value="Ribosomal_bL31"/>
</dbReference>
<dbReference type="InterPro" id="IPR027493">
    <property type="entry name" value="Ribosomal_bL31_B"/>
</dbReference>
<dbReference type="InterPro" id="IPR042105">
    <property type="entry name" value="Ribosomal_bL31_sf"/>
</dbReference>
<dbReference type="NCBIfam" id="TIGR00105">
    <property type="entry name" value="L31"/>
    <property type="match status" value="1"/>
</dbReference>
<dbReference type="NCBIfam" id="NF002462">
    <property type="entry name" value="PRK01678.1"/>
    <property type="match status" value="1"/>
</dbReference>
<dbReference type="PANTHER" id="PTHR33280">
    <property type="entry name" value="50S RIBOSOMAL PROTEIN L31, CHLOROPLASTIC"/>
    <property type="match status" value="1"/>
</dbReference>
<dbReference type="PANTHER" id="PTHR33280:SF1">
    <property type="entry name" value="LARGE RIBOSOMAL SUBUNIT PROTEIN BL31C"/>
    <property type="match status" value="1"/>
</dbReference>
<dbReference type="Pfam" id="PF01197">
    <property type="entry name" value="Ribosomal_L31"/>
    <property type="match status" value="1"/>
</dbReference>
<dbReference type="PRINTS" id="PR01249">
    <property type="entry name" value="RIBOSOMALL31"/>
</dbReference>
<dbReference type="SUPFAM" id="SSF143800">
    <property type="entry name" value="L28p-like"/>
    <property type="match status" value="1"/>
</dbReference>
<dbReference type="PROSITE" id="PS01143">
    <property type="entry name" value="RIBOSOMAL_L31"/>
    <property type="match status" value="1"/>
</dbReference>
<evidence type="ECO:0000255" key="1">
    <source>
        <dbReference type="HAMAP-Rule" id="MF_00502"/>
    </source>
</evidence>
<evidence type="ECO:0000305" key="2"/>
<reference key="1">
    <citation type="journal article" date="2004" name="Nucleic Acids Res.">
        <title>Comparative analysis of the Borrelia garinii genome.</title>
        <authorList>
            <person name="Gloeckner G."/>
            <person name="Lehmann R."/>
            <person name="Romualdi A."/>
            <person name="Pradella S."/>
            <person name="Schulte-Spechtel U."/>
            <person name="Schilhabel M."/>
            <person name="Wilske B."/>
            <person name="Suehnel J."/>
            <person name="Platzer M."/>
        </authorList>
    </citation>
    <scope>NUCLEOTIDE SEQUENCE [LARGE SCALE GENOMIC DNA]</scope>
    <source>
        <strain>ATCC BAA-2496 / DSM 23469 / PBi</strain>
    </source>
</reference>
<sequence length="81" mass="9287">MRKGVHPKNNLVVFKDGSNGAMFLTRSTLNSKETIKYTDGKEYPLITVEITSRSHPFYTGQQKFVDAAGRIDKFNKRYKKS</sequence>
<gene>
    <name evidence="1" type="primary">rpmE2</name>
    <name type="synonym">rpmE</name>
    <name type="ordered locus">BG0232</name>
</gene>
<organism>
    <name type="scientific">Borrelia garinii subsp. bavariensis (strain ATCC BAA-2496 / DSM 23469 / PBi)</name>
    <name type="common">Borreliella bavariensis</name>
    <dbReference type="NCBI Taxonomy" id="290434"/>
    <lineage>
        <taxon>Bacteria</taxon>
        <taxon>Pseudomonadati</taxon>
        <taxon>Spirochaetota</taxon>
        <taxon>Spirochaetia</taxon>
        <taxon>Spirochaetales</taxon>
        <taxon>Borreliaceae</taxon>
        <taxon>Borreliella</taxon>
    </lineage>
</organism>
<name>RL31B_BORGP</name>
<protein>
    <recommendedName>
        <fullName evidence="1">Large ribosomal subunit protein bL31B</fullName>
    </recommendedName>
    <alternativeName>
        <fullName evidence="2">50S ribosomal protein L31 type B</fullName>
    </alternativeName>
</protein>